<accession>Q5UQU9</accession>
<reference key="1">
    <citation type="journal article" date="2004" name="Science">
        <title>The 1.2-megabase genome sequence of Mimivirus.</title>
        <authorList>
            <person name="Raoult D."/>
            <person name="Audic S."/>
            <person name="Robert C."/>
            <person name="Abergel C."/>
            <person name="Renesto P."/>
            <person name="Ogata H."/>
            <person name="La Scola B."/>
            <person name="Susan M."/>
            <person name="Claverie J.-M."/>
        </authorList>
    </citation>
    <scope>NUCLEOTIDE SEQUENCE [LARGE SCALE GENOMIC DNA]</scope>
    <source>
        <strain>Rowbotham-Bradford</strain>
    </source>
</reference>
<sequence>MDYQTLLQNQLLSSNNIDYLVELIISNFRISKKATIKCINIITNNLSTYLNNIDRFPENNNELVDAINFLNNKCIEDFAIYLTNKYPNTNIFRNSSNQSSQSNQVNQSNQSSPSSQISPSSQVNKFNQSSQINQSNQINQSNQINQSNQLNHHSEEFQEFIILTEQEKNHLLKTHGINSLTTDKKKYKKTIEDDVITILSNPIMMQMFGLMLNQSSQPKKPDIIFDQILDSKQVIELKNQFQNKSVVSKSTESKTNLGSNTNIIINSKINHETDNKFSNKPNGNNDETNDKTNNETNDETNDETDNDDEIDNNIDLNVKLDNITTSDVPVILDKLRNLKILRETYVNKGNKKIANKIQNKIIQIVETLNAYKNKQSQIAIEAKNKIKHITVSNKEVSENIELIELEFNPNCDLEMLTENNYINLKNLFIKKIPDRKITDITLVEYLLPNNDYNITKFNNKFKIYSNSRLYSIDIPPSKYEINTLLSYIKNQLQFIDFQINDDNIISIKSQTDFELIVDRIEETVFPILGFNGKQSDYKDKSEYIATKSYNLNSKVYFSLQGVAMEPIEVIMGTKISYNKSIKKSSAGITIKNLVLNFKTELDQFYDFNDTFKMSLSITYQS</sequence>
<organism>
    <name type="scientific">Acanthamoeba polyphaga mimivirus</name>
    <name type="common">APMV</name>
    <dbReference type="NCBI Taxonomy" id="212035"/>
    <lineage>
        <taxon>Viruses</taxon>
        <taxon>Varidnaviria</taxon>
        <taxon>Bamfordvirae</taxon>
        <taxon>Nucleocytoviricota</taxon>
        <taxon>Megaviricetes</taxon>
        <taxon>Imitervirales</taxon>
        <taxon>Mimiviridae</taxon>
        <taxon>Megamimivirinae</taxon>
        <taxon>Mimivirus</taxon>
        <taxon>Mimivirus bradfordmassiliense</taxon>
    </lineage>
</organism>
<proteinExistence type="predicted"/>
<protein>
    <recommendedName>
        <fullName>Uncharacterized protein L356</fullName>
    </recommendedName>
</protein>
<organismHost>
    <name type="scientific">Acanthamoeba polyphaga</name>
    <name type="common">Amoeba</name>
    <dbReference type="NCBI Taxonomy" id="5757"/>
</organismHost>
<name>YL356_MIMIV</name>
<feature type="chain" id="PRO_0000253245" description="Uncharacterized protein L356">
    <location>
        <begin position="1"/>
        <end position="621"/>
    </location>
</feature>
<feature type="region of interest" description="Disordered" evidence="2">
    <location>
        <begin position="92"/>
        <end position="134"/>
    </location>
</feature>
<feature type="region of interest" description="Disordered" evidence="2">
    <location>
        <begin position="268"/>
        <end position="310"/>
    </location>
</feature>
<feature type="coiled-coil region" evidence="1">
    <location>
        <begin position="354"/>
        <end position="401"/>
    </location>
</feature>
<feature type="compositionally biased region" description="Low complexity" evidence="2">
    <location>
        <begin position="94"/>
        <end position="134"/>
    </location>
</feature>
<feature type="compositionally biased region" description="Acidic residues" evidence="2">
    <location>
        <begin position="296"/>
        <end position="310"/>
    </location>
</feature>
<evidence type="ECO:0000255" key="1"/>
<evidence type="ECO:0000256" key="2">
    <source>
        <dbReference type="SAM" id="MobiDB-lite"/>
    </source>
</evidence>
<gene>
    <name type="ordered locus">MIMI_L356</name>
</gene>
<dbReference type="EMBL" id="AY653733">
    <property type="protein sequence ID" value="AAV50625.1"/>
    <property type="molecule type" value="Genomic_DNA"/>
</dbReference>
<dbReference type="SMR" id="Q5UQU9"/>
<dbReference type="KEGG" id="vg:9924975"/>
<dbReference type="OrthoDB" id="14500at10239"/>
<dbReference type="Proteomes" id="UP000001134">
    <property type="component" value="Genome"/>
</dbReference>
<keyword id="KW-0175">Coiled coil</keyword>
<keyword id="KW-1185">Reference proteome</keyword>